<accession>Q6ED65</accession>
<keyword id="KW-0025">Alternative splicing</keyword>
<keyword id="KW-0963">Cytoplasm</keyword>
<keyword id="KW-0206">Cytoskeleton</keyword>
<keyword id="KW-0493">Microtubule</keyword>
<keyword id="KW-1185">Reference proteome</keyword>
<keyword id="KW-0677">Repeat</keyword>
<keyword id="KW-0853">WD repeat</keyword>
<feature type="chain" id="PRO_0000284397" description="Echinoderm microtubule-associated protein-like 5">
    <location>
        <begin position="1"/>
        <end position="1977"/>
    </location>
</feature>
<feature type="repeat" description="WD 1">
    <location>
        <begin position="59"/>
        <end position="100"/>
    </location>
</feature>
<feature type="repeat" description="WD 2">
    <location>
        <begin position="104"/>
        <end position="145"/>
    </location>
</feature>
<feature type="repeat" description="WD 3">
    <location>
        <begin position="148"/>
        <end position="187"/>
    </location>
</feature>
<feature type="repeat" description="WD 4">
    <location>
        <begin position="195"/>
        <end position="233"/>
    </location>
</feature>
<feature type="repeat" description="WD 5">
    <location>
        <begin position="235"/>
        <end position="273"/>
    </location>
</feature>
<feature type="repeat" description="WD 6">
    <location>
        <begin position="280"/>
        <end position="321"/>
    </location>
</feature>
<feature type="repeat" description="WD 7">
    <location>
        <begin position="323"/>
        <end position="362"/>
    </location>
</feature>
<feature type="repeat" description="WD 8">
    <location>
        <begin position="364"/>
        <end position="403"/>
    </location>
</feature>
<feature type="repeat" description="WD 9">
    <location>
        <begin position="406"/>
        <end position="445"/>
    </location>
</feature>
<feature type="repeat" description="WD 10">
    <location>
        <begin position="449"/>
        <end position="488"/>
    </location>
</feature>
<feature type="repeat" description="WD 11">
    <location>
        <begin position="561"/>
        <end position="601"/>
    </location>
</feature>
<feature type="repeat" description="WD 12">
    <location>
        <begin position="725"/>
        <end position="766"/>
    </location>
</feature>
<feature type="repeat" description="WD 13">
    <location>
        <begin position="770"/>
        <end position="811"/>
    </location>
</feature>
<feature type="repeat" description="WD 14">
    <location>
        <begin position="814"/>
        <end position="853"/>
    </location>
</feature>
<feature type="repeat" description="WD 15">
    <location>
        <begin position="861"/>
        <end position="900"/>
    </location>
</feature>
<feature type="repeat" description="WD 16">
    <location>
        <begin position="901"/>
        <end position="940"/>
    </location>
</feature>
<feature type="repeat" description="WD 17">
    <location>
        <begin position="996"/>
        <end position="1035"/>
    </location>
</feature>
<feature type="repeat" description="WD 18">
    <location>
        <begin position="1038"/>
        <end position="1077"/>
    </location>
</feature>
<feature type="repeat" description="WD 19">
    <location>
        <begin position="1080"/>
        <end position="1120"/>
    </location>
</feature>
<feature type="repeat" description="WD 20">
    <location>
        <begin position="1236"/>
        <end position="1276"/>
    </location>
</feature>
<feature type="repeat" description="WD 21">
    <location>
        <begin position="1420"/>
        <end position="1471"/>
    </location>
</feature>
<feature type="repeat" description="WD 22">
    <location>
        <begin position="1475"/>
        <end position="1516"/>
    </location>
</feature>
<feature type="repeat" description="WD 23">
    <location>
        <begin position="1519"/>
        <end position="1558"/>
    </location>
</feature>
<feature type="repeat" description="WD 24">
    <location>
        <begin position="1568"/>
        <end position="1606"/>
    </location>
</feature>
<feature type="repeat" description="WD 25">
    <location>
        <begin position="1608"/>
        <end position="1654"/>
    </location>
</feature>
<feature type="repeat" description="WD 26">
    <location>
        <begin position="1699"/>
        <end position="1739"/>
    </location>
</feature>
<feature type="repeat" description="WD 27">
    <location>
        <begin position="1741"/>
        <end position="1782"/>
    </location>
</feature>
<feature type="repeat" description="WD 28">
    <location>
        <begin position="1783"/>
        <end position="1822"/>
    </location>
</feature>
<feature type="repeat" description="WD 29">
    <location>
        <begin position="1895"/>
        <end position="1934"/>
    </location>
</feature>
<feature type="repeat" description="WD 30">
    <location>
        <begin position="1940"/>
        <end position="1977"/>
    </location>
</feature>
<feature type="region of interest" description="Disordered" evidence="2">
    <location>
        <begin position="609"/>
        <end position="629"/>
    </location>
</feature>
<feature type="region of interest" description="Disordered" evidence="2">
    <location>
        <begin position="1274"/>
        <end position="1299"/>
    </location>
</feature>
<feature type="region of interest" description="Disordered" evidence="2">
    <location>
        <begin position="1323"/>
        <end position="1363"/>
    </location>
</feature>
<feature type="compositionally biased region" description="Acidic residues" evidence="2">
    <location>
        <begin position="615"/>
        <end position="629"/>
    </location>
</feature>
<feature type="compositionally biased region" description="Acidic residues" evidence="2">
    <location>
        <begin position="1281"/>
        <end position="1294"/>
    </location>
</feature>
<feature type="compositionally biased region" description="Basic and acidic residues" evidence="2">
    <location>
        <begin position="1326"/>
        <end position="1337"/>
    </location>
</feature>
<feature type="splice variant" id="VSP_024490" description="In isoform 3." evidence="5">
    <location>
        <begin position="1167"/>
        <end position="1977"/>
    </location>
</feature>
<feature type="splice variant" id="VSP_024491" description="In isoform 4." evidence="5">
    <location>
        <begin position="1336"/>
        <end position="1977"/>
    </location>
</feature>
<feature type="splice variant" id="VSP_024492" description="In isoform 2." evidence="4">
    <original>NNLTFTGTISGDVCVWKDHILCRVV</original>
    <variation>VCLLKCCVMCDLECVLPYIHKQHEY</variation>
    <location>
        <begin position="1581"/>
        <end position="1605"/>
    </location>
</feature>
<feature type="splice variant" id="VSP_024493" description="In isoform 2." evidence="4">
    <location>
        <begin position="1606"/>
        <end position="1977"/>
    </location>
</feature>
<comment type="function">
    <text evidence="1">May modify the assembly dynamics of microtubules, such that microtubules are slightly longer, but more dynamic.</text>
</comment>
<comment type="subcellular location">
    <subcellularLocation>
        <location evidence="5">Cytoplasm</location>
        <location evidence="5">Cytoskeleton</location>
    </subcellularLocation>
</comment>
<comment type="alternative products">
    <event type="alternative splicing"/>
    <isoform>
        <id>Q6ED65-1</id>
        <name>1</name>
        <sequence type="displayed"/>
    </isoform>
    <isoform>
        <id>Q6ED65-2</id>
        <name>2</name>
        <sequence type="described" ref="VSP_024492 VSP_024493"/>
    </isoform>
    <isoform>
        <id>Q6ED65-3</id>
        <name>3</name>
        <sequence type="described" ref="VSP_024490"/>
    </isoform>
    <isoform>
        <id>Q6ED65-4</id>
        <name>4</name>
        <sequence type="described" ref="VSP_024491"/>
    </isoform>
</comment>
<comment type="tissue specificity">
    <text evidence="3">Highly expressed in brain, especially in hippocampus, cerebellum and olfactory bulb (at protein level).</text>
</comment>
<comment type="developmental stage">
    <text evidence="3">Expressed in fore- and hindbrain structures from 13 dpc onwards.</text>
</comment>
<comment type="similarity">
    <text evidence="5">Belongs to the WD repeat EMAP family.</text>
</comment>
<sequence length="1977" mass="219808">MAARSAPSCHLRLEWVYGYRGHQCRNNLYYTAAKEIVYFVAGVGVVYSPREHRQKFYRGHSDDIISLALHPERVLVATGQVGKEPYICVWDSYTVQTVSVLKDVHTHGIACLAFDLDGQRLVSVGLDSKNAVCVWDWKRGKMLSMAPGHTDRIFDISWDLYQPNKLVSCGVKHIKFWSLCGNALTPKRGVFGKTGDLQTILCLACARDELTYSGALNGDIYVWKGINLIRTIQGAHTAGIFSMNACEEGFATGGRDGCIRLWDLTFKPITVIDLRETEQGYKGLSVRSVCWRGDHILVGTQDSEIFEIVVHERNKPFLIMQGHCEGELWALAVHPTKPLAVTGSDDRSVRIWSLVDHALIARCNMDEPIRCAAVNADGVHLALGMKDGSLTVLRVRDMTEVVHIKDRKEAIHELKYSPDGTYLAVGCNDSSVDIYGVAQRYKKVGECVGSLSFITHLDWSSDSKYLQTNDGSGKRLLYKMPGGKEVTSKEEVKGMHWASWTCVAGLEVNGIWPKYSDINDINSVDGNYVGQVLVTADDYGVVKLFRYPCLRKGAKFRKYIGHSAHVTNVRWSHDYQWVISIGGADHSVFQWKFIPERKLKDALHIAPQESLTESNSDESDSDLSDVPELDSEIEQETQLTYHRQVYKEDLPQLKEQCKEKQKSATSKRRERAPGNSIRLHFIHGYRGYDCRSNLFYTQIGEIVYHVAAVGVIYNRQQNTQRFYLGHDDDILCLAIHPLKDYVATGQVGRDPSIHVWDTETIKPLSILKGYHQYGICAVDFSADGKRLASVGIDDSHTIVLWDWKKGEKLSVARGSKDKIFVVKMNPYVPDKLITAGIKHMKFWRRAGGGLIGRKGYVGTLGKNDTMMCAVYGWTEEMAFSGTSTGDVCIWRDVFLVKTVKAHDGPVFSMHALEKGFVTGGKDGVVALWDDSFERCLKTYAIKRADLAPGSKGLLLEDNPSIRAISLGHGHILVGTKNGEILEVDKSGPVTLLVQGHMEGEVWGLATHPYLPICATVSDDKTLRIWDLSPSHCMLAVRKLKKGGRCCCFSPDGKALAVGLNDGSFLMANADTLEDLVSFHHRKDVISDIQFSPGSGKYLAVASHDSFVDIYNVTSSKRVGVCKGATSYITHIDWDSRGKLLQVNTGAKEQLFFEAPRGKKQTIPSVEVEKISWATWTSVLGLCCEGIWPIIGEVTDVTASCLTSDKMVLATGDDLGFVKLFRYPAKGKFGKFKKYVAHSTHVTNVRWTYDDSMLVTLGGADMSLMVWTSEVERHREKKNCDSEESDTDSEEDGGYDSDVTRENEISYTIRALSTNIRPMFGVKPHLQQKEPSVDERQGVVRGSRPPVSRAPPQPEKLQSNNVGKKKRPIEDLVLELAFGYRGRDCRNNVHYLNDGDDIIYHTASVGILHNVATGTQSFYQEHNDDILCLTVNQHPKFINIVATGQVGDSADMSATAPSVHIWDAVNKQTLSILRCSHSKGVCSVSFSATGKLLLSVGLDPEHTVTIWRWQEGAKIASRGGHNQRIFVAEFRPDSDTQFVSVGIKHVKFWTLAGRALLSKKGLLSTLEDARMQTMLAVAFGANNLTFTGTISGDVCVWKDHILCRVVARAHNGPVFAMYTTLRDGLIVTGGKERPSKEGGAVKLWDQELRRCRAFRLETGQVTDCVRSVCRGKGKILVGTRNSEIIEVGEKNAACNILVNGHVDGPIWGLATHPSRDFFLSAAEDGTVRLWDIADKKMLNKVNLGHAARTVCYSPEGDMVAIGMKNGEFIILLVSSLKIWGKKRDRRCAIHDIRFSPDSRYLAVGSSENSVDFYDLTLGPTLNRISYCKDIPSFVIQMDFSADSRHLQVSSGCYKRHVYEVPSGKHLVDHAAIDRITWATWTSILGDEVMGIWSRHAEKADVTCACVSHSGISLVTGDDFGMVKLYDFPCPEKFAKHKRFLGHSPHVTNIRFTSGDRHVVSAGGDDCSVFVWKCVHTPH</sequence>
<reference key="1">
    <citation type="journal article" date="2004" name="Gene">
        <title>Eml5, a novel WD40 domain protein expressed in rat brain.</title>
        <authorList>
            <person name="O'Connor V."/>
            <person name="Houtman S.H."/>
            <person name="De Zeeuw C.I."/>
            <person name="Bliss T.V.P."/>
            <person name="French P.J."/>
        </authorList>
    </citation>
    <scope>NUCLEOTIDE SEQUENCE [MRNA] (ISOFORM 2)</scope>
    <scope>TISSUE SPECIFICITY</scope>
    <scope>DEVELOPMENTAL STAGE</scope>
    <scope>ALTERNATIVE SPLICING</scope>
</reference>
<reference key="2">
    <citation type="journal article" date="2004" name="Nature">
        <title>Genome sequence of the Brown Norway rat yields insights into mammalian evolution.</title>
        <authorList>
            <person name="Gibbs R.A."/>
            <person name="Weinstock G.M."/>
            <person name="Metzker M.L."/>
            <person name="Muzny D.M."/>
            <person name="Sodergren E.J."/>
            <person name="Scherer S."/>
            <person name="Scott G."/>
            <person name="Steffen D."/>
            <person name="Worley K.C."/>
            <person name="Burch P.E."/>
            <person name="Okwuonu G."/>
            <person name="Hines S."/>
            <person name="Lewis L."/>
            <person name="Deramo C."/>
            <person name="Delgado O."/>
            <person name="Dugan-Rocha S."/>
            <person name="Miner G."/>
            <person name="Morgan M."/>
            <person name="Hawes A."/>
            <person name="Gill R."/>
            <person name="Holt R.A."/>
            <person name="Adams M.D."/>
            <person name="Amanatides P.G."/>
            <person name="Baden-Tillson H."/>
            <person name="Barnstead M."/>
            <person name="Chin S."/>
            <person name="Evans C.A."/>
            <person name="Ferriera S."/>
            <person name="Fosler C."/>
            <person name="Glodek A."/>
            <person name="Gu Z."/>
            <person name="Jennings D."/>
            <person name="Kraft C.L."/>
            <person name="Nguyen T."/>
            <person name="Pfannkoch C.M."/>
            <person name="Sitter C."/>
            <person name="Sutton G.G."/>
            <person name="Venter J.C."/>
            <person name="Woodage T."/>
            <person name="Smith D."/>
            <person name="Lee H.-M."/>
            <person name="Gustafson E."/>
            <person name="Cahill P."/>
            <person name="Kana A."/>
            <person name="Doucette-Stamm L."/>
            <person name="Weinstock K."/>
            <person name="Fechtel K."/>
            <person name="Weiss R.B."/>
            <person name="Dunn D.M."/>
            <person name="Green E.D."/>
            <person name="Blakesley R.W."/>
            <person name="Bouffard G.G."/>
            <person name="De Jong P.J."/>
            <person name="Osoegawa K."/>
            <person name="Zhu B."/>
            <person name="Marra M."/>
            <person name="Schein J."/>
            <person name="Bosdet I."/>
            <person name="Fjell C."/>
            <person name="Jones S."/>
            <person name="Krzywinski M."/>
            <person name="Mathewson C."/>
            <person name="Siddiqui A."/>
            <person name="Wye N."/>
            <person name="McPherson J."/>
            <person name="Zhao S."/>
            <person name="Fraser C.M."/>
            <person name="Shetty J."/>
            <person name="Shatsman S."/>
            <person name="Geer K."/>
            <person name="Chen Y."/>
            <person name="Abramzon S."/>
            <person name="Nierman W.C."/>
            <person name="Havlak P.H."/>
            <person name="Chen R."/>
            <person name="Durbin K.J."/>
            <person name="Egan A."/>
            <person name="Ren Y."/>
            <person name="Song X.-Z."/>
            <person name="Li B."/>
            <person name="Liu Y."/>
            <person name="Qin X."/>
            <person name="Cawley S."/>
            <person name="Cooney A.J."/>
            <person name="D'Souza L.M."/>
            <person name="Martin K."/>
            <person name="Wu J.Q."/>
            <person name="Gonzalez-Garay M.L."/>
            <person name="Jackson A.R."/>
            <person name="Kalafus K.J."/>
            <person name="McLeod M.P."/>
            <person name="Milosavljevic A."/>
            <person name="Virk D."/>
            <person name="Volkov A."/>
            <person name="Wheeler D.A."/>
            <person name="Zhang Z."/>
            <person name="Bailey J.A."/>
            <person name="Eichler E.E."/>
            <person name="Tuzun E."/>
            <person name="Birney E."/>
            <person name="Mongin E."/>
            <person name="Ureta-Vidal A."/>
            <person name="Woodwark C."/>
            <person name="Zdobnov E."/>
            <person name="Bork P."/>
            <person name="Suyama M."/>
            <person name="Torrents D."/>
            <person name="Alexandersson M."/>
            <person name="Trask B.J."/>
            <person name="Young J.M."/>
            <person name="Huang H."/>
            <person name="Wang H."/>
            <person name="Xing H."/>
            <person name="Daniels S."/>
            <person name="Gietzen D."/>
            <person name="Schmidt J."/>
            <person name="Stevens K."/>
            <person name="Vitt U."/>
            <person name="Wingrove J."/>
            <person name="Camara F."/>
            <person name="Mar Alba M."/>
            <person name="Abril J.F."/>
            <person name="Guigo R."/>
            <person name="Smit A."/>
            <person name="Dubchak I."/>
            <person name="Rubin E.M."/>
            <person name="Couronne O."/>
            <person name="Poliakov A."/>
            <person name="Huebner N."/>
            <person name="Ganten D."/>
            <person name="Goesele C."/>
            <person name="Hummel O."/>
            <person name="Kreitler T."/>
            <person name="Lee Y.-A."/>
            <person name="Monti J."/>
            <person name="Schulz H."/>
            <person name="Zimdahl H."/>
            <person name="Himmelbauer H."/>
            <person name="Lehrach H."/>
            <person name="Jacob H.J."/>
            <person name="Bromberg S."/>
            <person name="Gullings-Handley J."/>
            <person name="Jensen-Seaman M.I."/>
            <person name="Kwitek A.E."/>
            <person name="Lazar J."/>
            <person name="Pasko D."/>
            <person name="Tonellato P.J."/>
            <person name="Twigger S."/>
            <person name="Ponting C.P."/>
            <person name="Duarte J.M."/>
            <person name="Rice S."/>
            <person name="Goodstadt L."/>
            <person name="Beatson S.A."/>
            <person name="Emes R.D."/>
            <person name="Winter E.E."/>
            <person name="Webber C."/>
            <person name="Brandt P."/>
            <person name="Nyakatura G."/>
            <person name="Adetobi M."/>
            <person name="Chiaromonte F."/>
            <person name="Elnitski L."/>
            <person name="Eswara P."/>
            <person name="Hardison R.C."/>
            <person name="Hou M."/>
            <person name="Kolbe D."/>
            <person name="Makova K."/>
            <person name="Miller W."/>
            <person name="Nekrutenko A."/>
            <person name="Riemer C."/>
            <person name="Schwartz S."/>
            <person name="Taylor J."/>
            <person name="Yang S."/>
            <person name="Zhang Y."/>
            <person name="Lindpaintner K."/>
            <person name="Andrews T.D."/>
            <person name="Caccamo M."/>
            <person name="Clamp M."/>
            <person name="Clarke L."/>
            <person name="Curwen V."/>
            <person name="Durbin R.M."/>
            <person name="Eyras E."/>
            <person name="Searle S.M."/>
            <person name="Cooper G.M."/>
            <person name="Batzoglou S."/>
            <person name="Brudno M."/>
            <person name="Sidow A."/>
            <person name="Stone E.A."/>
            <person name="Payseur B.A."/>
            <person name="Bourque G."/>
            <person name="Lopez-Otin C."/>
            <person name="Puente X.S."/>
            <person name="Chakrabarti K."/>
            <person name="Chatterji S."/>
            <person name="Dewey C."/>
            <person name="Pachter L."/>
            <person name="Bray N."/>
            <person name="Yap V.B."/>
            <person name="Caspi A."/>
            <person name="Tesler G."/>
            <person name="Pevzner P.A."/>
            <person name="Haussler D."/>
            <person name="Roskin K.M."/>
            <person name="Baertsch R."/>
            <person name="Clawson H."/>
            <person name="Furey T.S."/>
            <person name="Hinrichs A.S."/>
            <person name="Karolchik D."/>
            <person name="Kent W.J."/>
            <person name="Rosenbloom K.R."/>
            <person name="Trumbower H."/>
            <person name="Weirauch M."/>
            <person name="Cooper D.N."/>
            <person name="Stenson P.D."/>
            <person name="Ma B."/>
            <person name="Brent M."/>
            <person name="Arumugam M."/>
            <person name="Shteynberg D."/>
            <person name="Copley R.R."/>
            <person name="Taylor M.S."/>
            <person name="Riethman H."/>
            <person name="Mudunuri U."/>
            <person name="Peterson J."/>
            <person name="Guyer M."/>
            <person name="Felsenfeld A."/>
            <person name="Old S."/>
            <person name="Mockrin S."/>
            <person name="Collins F.S."/>
        </authorList>
    </citation>
    <scope>NUCLEOTIDE SEQUENCE [LARGE SCALE GENOMIC DNA]</scope>
    <source>
        <strain>Brown Norway</strain>
    </source>
</reference>
<gene>
    <name type="primary">Eml5</name>
</gene>
<evidence type="ECO:0000250" key="1"/>
<evidence type="ECO:0000256" key="2">
    <source>
        <dbReference type="SAM" id="MobiDB-lite"/>
    </source>
</evidence>
<evidence type="ECO:0000269" key="3">
    <source>
    </source>
</evidence>
<evidence type="ECO:0000303" key="4">
    <source>
    </source>
</evidence>
<evidence type="ECO:0000305" key="5"/>
<dbReference type="EMBL" id="AY445136">
    <property type="protein sequence ID" value="AAS01608.1"/>
    <property type="molecule type" value="mRNA"/>
</dbReference>
<dbReference type="EMBL" id="AABR03048720">
    <property type="status" value="NOT_ANNOTATED_CDS"/>
    <property type="molecule type" value="Genomic_DNA"/>
</dbReference>
<dbReference type="EMBL" id="AABR03052861">
    <property type="status" value="NOT_ANNOTATED_CDS"/>
    <property type="molecule type" value="Genomic_DNA"/>
</dbReference>
<dbReference type="EMBL" id="AABR03050388">
    <property type="status" value="NOT_ANNOTATED_CDS"/>
    <property type="molecule type" value="Genomic_DNA"/>
</dbReference>
<dbReference type="EMBL" id="AABR03049430">
    <property type="status" value="NOT_ANNOTATED_CDS"/>
    <property type="molecule type" value="Genomic_DNA"/>
</dbReference>
<dbReference type="SMR" id="Q6ED65"/>
<dbReference type="FunCoup" id="Q6ED65">
    <property type="interactions" value="979"/>
</dbReference>
<dbReference type="STRING" id="10116.ENSRNOP00000054411"/>
<dbReference type="CarbonylDB" id="Q6ED65"/>
<dbReference type="iPTMnet" id="Q6ED65"/>
<dbReference type="PhosphoSitePlus" id="Q6ED65"/>
<dbReference type="PaxDb" id="10116-ENSRNOP00000054411"/>
<dbReference type="UCSC" id="RGD:1303275">
    <molecule id="Q6ED65-1"/>
    <property type="organism name" value="rat"/>
</dbReference>
<dbReference type="AGR" id="RGD:1303275"/>
<dbReference type="RGD" id="1303275">
    <property type="gene designation" value="Eml5"/>
</dbReference>
<dbReference type="eggNOG" id="KOG2106">
    <property type="taxonomic scope" value="Eukaryota"/>
</dbReference>
<dbReference type="InParanoid" id="Q6ED65"/>
<dbReference type="PhylomeDB" id="Q6ED65"/>
<dbReference type="PRO" id="PR:Q6ED65"/>
<dbReference type="Proteomes" id="UP000002494">
    <property type="component" value="Unplaced"/>
</dbReference>
<dbReference type="GO" id="GO:0005737">
    <property type="term" value="C:cytoplasm"/>
    <property type="evidence" value="ECO:0007669"/>
    <property type="project" value="UniProtKB-KW"/>
</dbReference>
<dbReference type="GO" id="GO:0005874">
    <property type="term" value="C:microtubule"/>
    <property type="evidence" value="ECO:0007669"/>
    <property type="project" value="UniProtKB-KW"/>
</dbReference>
<dbReference type="GO" id="GO:0008017">
    <property type="term" value="F:microtubule binding"/>
    <property type="evidence" value="ECO:0000318"/>
    <property type="project" value="GO_Central"/>
</dbReference>
<dbReference type="FunFam" id="2.130.10.10:FF:000040">
    <property type="entry name" value="echinoderm microtubule-associated protein-like 6 isoform X1"/>
    <property type="match status" value="1"/>
</dbReference>
<dbReference type="FunFam" id="2.130.10.10:FF:000042">
    <property type="entry name" value="echinoderm microtubule-associated protein-like 6 isoform X1"/>
    <property type="match status" value="1"/>
</dbReference>
<dbReference type="FunFam" id="2.130.10.10:FF:000044">
    <property type="entry name" value="echinoderm microtubule-associated protein-like 6 isoform X1"/>
    <property type="match status" value="1"/>
</dbReference>
<dbReference type="FunFam" id="2.130.10.10:FF:000024">
    <property type="entry name" value="Putative echinoderm microtubule-associated protein-like 6"/>
    <property type="match status" value="1"/>
</dbReference>
<dbReference type="FunFam" id="2.130.10.10:FF:000035">
    <property type="entry name" value="Putative echinoderm microtubule-associated protein-like 6"/>
    <property type="match status" value="1"/>
</dbReference>
<dbReference type="FunFam" id="2.130.10.10:FF:000037">
    <property type="entry name" value="Putative echinoderm microtubule-associated protein-like 6"/>
    <property type="match status" value="1"/>
</dbReference>
<dbReference type="Gene3D" id="2.130.10.10">
    <property type="entry name" value="YVTN repeat-like/Quinoprotein amine dehydrogenase"/>
    <property type="match status" value="6"/>
</dbReference>
<dbReference type="InterPro" id="IPR055442">
    <property type="entry name" value="Beta-prop_EML-like_2nd"/>
</dbReference>
<dbReference type="InterPro" id="IPR055439">
    <property type="entry name" value="Beta-prop_EML_1st"/>
</dbReference>
<dbReference type="InterPro" id="IPR005108">
    <property type="entry name" value="HELP"/>
</dbReference>
<dbReference type="InterPro" id="IPR011047">
    <property type="entry name" value="Quinoprotein_ADH-like_sf"/>
</dbReference>
<dbReference type="InterPro" id="IPR015943">
    <property type="entry name" value="WD40/YVTN_repeat-like_dom_sf"/>
</dbReference>
<dbReference type="InterPro" id="IPR019775">
    <property type="entry name" value="WD40_repeat_CS"/>
</dbReference>
<dbReference type="InterPro" id="IPR036322">
    <property type="entry name" value="WD40_repeat_dom_sf"/>
</dbReference>
<dbReference type="InterPro" id="IPR001680">
    <property type="entry name" value="WD40_rpt"/>
</dbReference>
<dbReference type="InterPro" id="IPR050630">
    <property type="entry name" value="WD_repeat_EMAP"/>
</dbReference>
<dbReference type="PANTHER" id="PTHR13720:SF16">
    <property type="entry name" value="ECHINODERM MICROTUBULE-ASSOCIATED PROTEIN-LIKE 5"/>
    <property type="match status" value="1"/>
</dbReference>
<dbReference type="PANTHER" id="PTHR13720">
    <property type="entry name" value="WD-40 REPEAT PROTEIN"/>
    <property type="match status" value="1"/>
</dbReference>
<dbReference type="Pfam" id="PF23409">
    <property type="entry name" value="Beta-prop_EML"/>
    <property type="match status" value="3"/>
</dbReference>
<dbReference type="Pfam" id="PF23414">
    <property type="entry name" value="Beta-prop_EML_2"/>
    <property type="match status" value="3"/>
</dbReference>
<dbReference type="Pfam" id="PF03451">
    <property type="entry name" value="HELP"/>
    <property type="match status" value="3"/>
</dbReference>
<dbReference type="SMART" id="SM00320">
    <property type="entry name" value="WD40"/>
    <property type="match status" value="28"/>
</dbReference>
<dbReference type="SUPFAM" id="SSF101898">
    <property type="entry name" value="NHL repeat"/>
    <property type="match status" value="1"/>
</dbReference>
<dbReference type="SUPFAM" id="SSF50998">
    <property type="entry name" value="Quinoprotein alcohol dehydrogenase-like"/>
    <property type="match status" value="2"/>
</dbReference>
<dbReference type="SUPFAM" id="SSF50960">
    <property type="entry name" value="TolB, C-terminal domain"/>
    <property type="match status" value="1"/>
</dbReference>
<dbReference type="SUPFAM" id="SSF50978">
    <property type="entry name" value="WD40 repeat-like"/>
    <property type="match status" value="2"/>
</dbReference>
<dbReference type="PROSITE" id="PS00678">
    <property type="entry name" value="WD_REPEATS_1"/>
    <property type="match status" value="1"/>
</dbReference>
<dbReference type="PROSITE" id="PS50082">
    <property type="entry name" value="WD_REPEATS_2"/>
    <property type="match status" value="6"/>
</dbReference>
<dbReference type="PROSITE" id="PS50294">
    <property type="entry name" value="WD_REPEATS_REGION"/>
    <property type="match status" value="7"/>
</dbReference>
<protein>
    <recommendedName>
        <fullName>Echinoderm microtubule-associated protein-like 5</fullName>
        <shortName>EMAP-5</shortName>
        <shortName>EMAP-like protein 5</shortName>
    </recommendedName>
</protein>
<name>EMAL5_RAT</name>
<organism>
    <name type="scientific">Rattus norvegicus</name>
    <name type="common">Rat</name>
    <dbReference type="NCBI Taxonomy" id="10116"/>
    <lineage>
        <taxon>Eukaryota</taxon>
        <taxon>Metazoa</taxon>
        <taxon>Chordata</taxon>
        <taxon>Craniata</taxon>
        <taxon>Vertebrata</taxon>
        <taxon>Euteleostomi</taxon>
        <taxon>Mammalia</taxon>
        <taxon>Eutheria</taxon>
        <taxon>Euarchontoglires</taxon>
        <taxon>Glires</taxon>
        <taxon>Rodentia</taxon>
        <taxon>Myomorpha</taxon>
        <taxon>Muroidea</taxon>
        <taxon>Muridae</taxon>
        <taxon>Murinae</taxon>
        <taxon>Rattus</taxon>
    </lineage>
</organism>
<proteinExistence type="evidence at protein level"/>